<evidence type="ECO:0000255" key="1">
    <source>
        <dbReference type="HAMAP-Rule" id="MF_00090"/>
    </source>
</evidence>
<evidence type="ECO:0000305" key="2"/>
<proteinExistence type="inferred from homology"/>
<keyword id="KW-0963">Cytoplasm</keyword>
<keyword id="KW-0489">Methyltransferase</keyword>
<keyword id="KW-0949">S-adenosyl-L-methionine</keyword>
<keyword id="KW-0808">Transferase</keyword>
<name>PIMT_ECTM1</name>
<accession>A4XWR1</accession>
<dbReference type="EC" id="2.1.1.77" evidence="1"/>
<dbReference type="EMBL" id="CP000680">
    <property type="protein sequence ID" value="ABP85777.1"/>
    <property type="status" value="ALT_INIT"/>
    <property type="molecule type" value="Genomic_DNA"/>
</dbReference>
<dbReference type="SMR" id="A4XWR1"/>
<dbReference type="STRING" id="399739.Pmen_3023"/>
<dbReference type="KEGG" id="pmy:Pmen_3023"/>
<dbReference type="PATRIC" id="fig|399739.8.peg.3069"/>
<dbReference type="eggNOG" id="COG2518">
    <property type="taxonomic scope" value="Bacteria"/>
</dbReference>
<dbReference type="HOGENOM" id="CLU_055432_2_0_6"/>
<dbReference type="GO" id="GO:0005737">
    <property type="term" value="C:cytoplasm"/>
    <property type="evidence" value="ECO:0007669"/>
    <property type="project" value="UniProtKB-SubCell"/>
</dbReference>
<dbReference type="GO" id="GO:0004719">
    <property type="term" value="F:protein-L-isoaspartate (D-aspartate) O-methyltransferase activity"/>
    <property type="evidence" value="ECO:0007669"/>
    <property type="project" value="UniProtKB-UniRule"/>
</dbReference>
<dbReference type="GO" id="GO:0032259">
    <property type="term" value="P:methylation"/>
    <property type="evidence" value="ECO:0007669"/>
    <property type="project" value="UniProtKB-KW"/>
</dbReference>
<dbReference type="GO" id="GO:0036211">
    <property type="term" value="P:protein modification process"/>
    <property type="evidence" value="ECO:0007669"/>
    <property type="project" value="UniProtKB-UniRule"/>
</dbReference>
<dbReference type="GO" id="GO:0030091">
    <property type="term" value="P:protein repair"/>
    <property type="evidence" value="ECO:0007669"/>
    <property type="project" value="UniProtKB-UniRule"/>
</dbReference>
<dbReference type="CDD" id="cd02440">
    <property type="entry name" value="AdoMet_MTases"/>
    <property type="match status" value="1"/>
</dbReference>
<dbReference type="FunFam" id="3.40.50.150:FF:000010">
    <property type="entry name" value="Protein-L-isoaspartate O-methyltransferase"/>
    <property type="match status" value="1"/>
</dbReference>
<dbReference type="Gene3D" id="3.40.50.150">
    <property type="entry name" value="Vaccinia Virus protein VP39"/>
    <property type="match status" value="1"/>
</dbReference>
<dbReference type="HAMAP" id="MF_00090">
    <property type="entry name" value="PIMT"/>
    <property type="match status" value="1"/>
</dbReference>
<dbReference type="InterPro" id="IPR000682">
    <property type="entry name" value="PCMT"/>
</dbReference>
<dbReference type="InterPro" id="IPR029063">
    <property type="entry name" value="SAM-dependent_MTases_sf"/>
</dbReference>
<dbReference type="NCBIfam" id="TIGR00080">
    <property type="entry name" value="pimt"/>
    <property type="match status" value="1"/>
</dbReference>
<dbReference type="NCBIfam" id="NF001453">
    <property type="entry name" value="PRK00312.1"/>
    <property type="match status" value="1"/>
</dbReference>
<dbReference type="PANTHER" id="PTHR11579">
    <property type="entry name" value="PROTEIN-L-ISOASPARTATE O-METHYLTRANSFERASE"/>
    <property type="match status" value="1"/>
</dbReference>
<dbReference type="PANTHER" id="PTHR11579:SF0">
    <property type="entry name" value="PROTEIN-L-ISOASPARTATE(D-ASPARTATE) O-METHYLTRANSFERASE"/>
    <property type="match status" value="1"/>
</dbReference>
<dbReference type="Pfam" id="PF01135">
    <property type="entry name" value="PCMT"/>
    <property type="match status" value="1"/>
</dbReference>
<dbReference type="SUPFAM" id="SSF53335">
    <property type="entry name" value="S-adenosyl-L-methionine-dependent methyltransferases"/>
    <property type="match status" value="1"/>
</dbReference>
<dbReference type="PROSITE" id="PS01279">
    <property type="entry name" value="PCMT"/>
    <property type="match status" value="1"/>
</dbReference>
<sequence>MTSQRTRERLIQRLYEEGLSNARVLEVIRRTPRHLFVDEALAHRAYEDTALPIGHNQTISQPYMVGRMTELLLAAGPLDKVLEIGTGSGYQTAVLAQLVERVFSVERIQVLQDRAKERLAELSLRNVVFRWGDGWEGWNALGPYNGIIVTAAAAQVPQALLDQLAPGGRLVIPVGAGDVQQLLLIVREEHGFSRHVLDAVRFVPLLNGPLA</sequence>
<feature type="chain" id="PRO_0000351909" description="Protein-L-isoaspartate O-methyltransferase">
    <location>
        <begin position="1"/>
        <end position="211"/>
    </location>
</feature>
<feature type="active site" evidence="1">
    <location>
        <position position="60"/>
    </location>
</feature>
<reference key="1">
    <citation type="submission" date="2007-04" db="EMBL/GenBank/DDBJ databases">
        <title>Complete sequence of Pseudomonas mendocina ymp.</title>
        <authorList>
            <consortium name="US DOE Joint Genome Institute"/>
            <person name="Copeland A."/>
            <person name="Lucas S."/>
            <person name="Lapidus A."/>
            <person name="Barry K."/>
            <person name="Glavina del Rio T."/>
            <person name="Dalin E."/>
            <person name="Tice H."/>
            <person name="Pitluck S."/>
            <person name="Kiss H."/>
            <person name="Brettin T."/>
            <person name="Detter J.C."/>
            <person name="Bruce D."/>
            <person name="Han C."/>
            <person name="Schmutz J."/>
            <person name="Larimer F."/>
            <person name="Land M."/>
            <person name="Hauser L."/>
            <person name="Kyrpides N."/>
            <person name="Mikhailova N."/>
            <person name="Hersman L."/>
            <person name="Dubois J."/>
            <person name="Maurice P."/>
            <person name="Richardson P."/>
        </authorList>
    </citation>
    <scope>NUCLEOTIDE SEQUENCE [LARGE SCALE GENOMIC DNA]</scope>
    <source>
        <strain>ymp</strain>
    </source>
</reference>
<gene>
    <name evidence="1" type="primary">pcm</name>
    <name type="ordered locus">Pmen_3023</name>
</gene>
<comment type="function">
    <text evidence="1">Catalyzes the methyl esterification of L-isoaspartyl residues in peptides and proteins that result from spontaneous decomposition of normal L-aspartyl and L-asparaginyl residues. It plays a role in the repair and/or degradation of damaged proteins.</text>
</comment>
<comment type="catalytic activity">
    <reaction evidence="1">
        <text>[protein]-L-isoaspartate + S-adenosyl-L-methionine = [protein]-L-isoaspartate alpha-methyl ester + S-adenosyl-L-homocysteine</text>
        <dbReference type="Rhea" id="RHEA:12705"/>
        <dbReference type="Rhea" id="RHEA-COMP:12143"/>
        <dbReference type="Rhea" id="RHEA-COMP:12144"/>
        <dbReference type="ChEBI" id="CHEBI:57856"/>
        <dbReference type="ChEBI" id="CHEBI:59789"/>
        <dbReference type="ChEBI" id="CHEBI:90596"/>
        <dbReference type="ChEBI" id="CHEBI:90598"/>
        <dbReference type="EC" id="2.1.1.77"/>
    </reaction>
</comment>
<comment type="subcellular location">
    <subcellularLocation>
        <location evidence="1">Cytoplasm</location>
    </subcellularLocation>
</comment>
<comment type="similarity">
    <text evidence="1">Belongs to the methyltransferase superfamily. L-isoaspartyl/D-aspartyl protein methyltransferase family.</text>
</comment>
<comment type="sequence caution" evidence="2">
    <conflict type="erroneous initiation">
        <sequence resource="EMBL-CDS" id="ABP85777"/>
    </conflict>
</comment>
<protein>
    <recommendedName>
        <fullName evidence="1">Protein-L-isoaspartate O-methyltransferase</fullName>
        <ecNumber evidence="1">2.1.1.77</ecNumber>
    </recommendedName>
    <alternativeName>
        <fullName evidence="1">L-isoaspartyl protein carboxyl methyltransferase</fullName>
    </alternativeName>
    <alternativeName>
        <fullName evidence="1">Protein L-isoaspartyl methyltransferase</fullName>
    </alternativeName>
    <alternativeName>
        <fullName evidence="1">Protein-beta-aspartate methyltransferase</fullName>
        <shortName evidence="1">PIMT</shortName>
    </alternativeName>
</protein>
<organism>
    <name type="scientific">Ectopseudomonas mendocina (strain ymp)</name>
    <name type="common">Pseudomonas mendocina</name>
    <dbReference type="NCBI Taxonomy" id="399739"/>
    <lineage>
        <taxon>Bacteria</taxon>
        <taxon>Pseudomonadati</taxon>
        <taxon>Pseudomonadota</taxon>
        <taxon>Gammaproteobacteria</taxon>
        <taxon>Pseudomonadales</taxon>
        <taxon>Pseudomonadaceae</taxon>
        <taxon>Ectopseudomonas</taxon>
    </lineage>
</organism>